<accession>Q5XEZ5</accession>
<accession>A0A097NUP4</accession>
<accession>O65460</accession>
<accession>Q56YV1</accession>
<organism>
    <name type="scientific">Arabidopsis thaliana</name>
    <name type="common">Mouse-ear cress</name>
    <dbReference type="NCBI Taxonomy" id="3702"/>
    <lineage>
        <taxon>Eukaryota</taxon>
        <taxon>Viridiplantae</taxon>
        <taxon>Streptophyta</taxon>
        <taxon>Embryophyta</taxon>
        <taxon>Tracheophyta</taxon>
        <taxon>Spermatophyta</taxon>
        <taxon>Magnoliopsida</taxon>
        <taxon>eudicotyledons</taxon>
        <taxon>Gunneridae</taxon>
        <taxon>Pentapetalae</taxon>
        <taxon>rosids</taxon>
        <taxon>malvids</taxon>
        <taxon>Brassicales</taxon>
        <taxon>Brassicaceae</taxon>
        <taxon>Camelineae</taxon>
        <taxon>Arabidopsis</taxon>
    </lineage>
</organism>
<comment type="function">
    <text evidence="2 3 4 7 8">Acts as an osmosensitive calcium-permeable cation channel (PubMed:24503647, PubMed:30382938, PubMed:38592763, PubMed:30382939). Specifically conducts cations including Ca(2+), K(+) and Na(+) in vitro. Inactivation or closure of the channel is calcium-dependent (PubMed:24503647). Mechanosensitive ion channel that converts mechanical stimuli into a flow of ions: activated in response to membrane stretch and poke (PubMed:30382938, PubMed:38592763, PubMed:30382939, PubMed:38570680).</text>
</comment>
<comment type="activity regulation">
    <text evidence="2 3 4 7 8">Activated by hyperosmotic shock after mannitol or NaCl treatment (PubMed:24503647). Activated by mechanical pressure: activated in response to membrane stretch and poke (PubMed:30382938, PubMed:38592763, PubMed:30382939, PubMed:38570680). Membrane lipids play a key role in mechanosensation by acting as a wall mainly formed by lipid head groups (PubMed:38570680).</text>
</comment>
<comment type="subunit">
    <text evidence="4 5 6 7">Homodimer.</text>
</comment>
<comment type="interaction">
    <interactant intactId="EBI-26954901">
        <id>Q5XEZ5</id>
    </interactant>
    <interactant intactId="EBI-26954901">
        <id>Q5XEZ5</id>
        <label>CSC1</label>
    </interactant>
    <organismsDiffer>false</organismsDiffer>
    <experiments>2</experiments>
</comment>
<comment type="subcellular location">
    <subcellularLocation>
        <location evidence="13">Membrane</location>
        <topology evidence="13">Multi-pass membrane protein</topology>
    </subcellularLocation>
</comment>
<comment type="similarity">
    <text evidence="13">Belongs to the CSC1 (TC 1.A.17) family.</text>
</comment>
<comment type="sequence caution" evidence="13">
    <conflict type="erroneous gene model prediction">
        <sequence resource="EMBL-CDS" id="CAA18115"/>
    </conflict>
</comment>
<comment type="sequence caution" evidence="13">
    <conflict type="erroneous gene model prediction">
        <sequence resource="EMBL-CDS" id="CAB79167"/>
    </conflict>
</comment>
<reference key="1">
    <citation type="journal article" date="2014" name="Nature">
        <title>OSCA1 mediates osmotic-stress-evoked Ca(2+) increases vital for osmosensing in Arabidopsis.</title>
        <authorList>
            <person name="Yuan F."/>
            <person name="Yang H."/>
            <person name="Xue Y."/>
            <person name="Kong D."/>
            <person name="Ye R."/>
            <person name="Li C."/>
            <person name="Zhang J."/>
            <person name="Theprungsirikul L."/>
            <person name="Shrift T."/>
            <person name="Krichilsky B."/>
            <person name="Johnson D.M."/>
            <person name="Swift G.B."/>
            <person name="He Y."/>
            <person name="Siedow J.N."/>
            <person name="Pei Z.M."/>
        </authorList>
    </citation>
    <scope>NUCLEOTIDE SEQUENCE [MRNA]</scope>
</reference>
<reference key="2">
    <citation type="journal article" date="1999" name="Nature">
        <title>Sequence and analysis of chromosome 4 of the plant Arabidopsis thaliana.</title>
        <authorList>
            <person name="Mayer K.F.X."/>
            <person name="Schueller C."/>
            <person name="Wambutt R."/>
            <person name="Murphy G."/>
            <person name="Volckaert G."/>
            <person name="Pohl T."/>
            <person name="Duesterhoeft A."/>
            <person name="Stiekema W."/>
            <person name="Entian K.-D."/>
            <person name="Terryn N."/>
            <person name="Harris B."/>
            <person name="Ansorge W."/>
            <person name="Brandt P."/>
            <person name="Grivell L.A."/>
            <person name="Rieger M."/>
            <person name="Weichselgartner M."/>
            <person name="de Simone V."/>
            <person name="Obermaier B."/>
            <person name="Mache R."/>
            <person name="Mueller M."/>
            <person name="Kreis M."/>
            <person name="Delseny M."/>
            <person name="Puigdomenech P."/>
            <person name="Watson M."/>
            <person name="Schmidtheini T."/>
            <person name="Reichert B."/>
            <person name="Portetelle D."/>
            <person name="Perez-Alonso M."/>
            <person name="Boutry M."/>
            <person name="Bancroft I."/>
            <person name="Vos P."/>
            <person name="Hoheisel J."/>
            <person name="Zimmermann W."/>
            <person name="Wedler H."/>
            <person name="Ridley P."/>
            <person name="Langham S.-A."/>
            <person name="McCullagh B."/>
            <person name="Bilham L."/>
            <person name="Robben J."/>
            <person name="van der Schueren J."/>
            <person name="Grymonprez B."/>
            <person name="Chuang Y.-J."/>
            <person name="Vandenbussche F."/>
            <person name="Braeken M."/>
            <person name="Weltjens I."/>
            <person name="Voet M."/>
            <person name="Bastiaens I."/>
            <person name="Aert R."/>
            <person name="Defoor E."/>
            <person name="Weitzenegger T."/>
            <person name="Bothe G."/>
            <person name="Ramsperger U."/>
            <person name="Hilbert H."/>
            <person name="Braun M."/>
            <person name="Holzer E."/>
            <person name="Brandt A."/>
            <person name="Peters S."/>
            <person name="van Staveren M."/>
            <person name="Dirkse W."/>
            <person name="Mooijman P."/>
            <person name="Klein Lankhorst R."/>
            <person name="Rose M."/>
            <person name="Hauf J."/>
            <person name="Koetter P."/>
            <person name="Berneiser S."/>
            <person name="Hempel S."/>
            <person name="Feldpausch M."/>
            <person name="Lamberth S."/>
            <person name="Van den Daele H."/>
            <person name="De Keyser A."/>
            <person name="Buysshaert C."/>
            <person name="Gielen J."/>
            <person name="Villarroel R."/>
            <person name="De Clercq R."/>
            <person name="van Montagu M."/>
            <person name="Rogers J."/>
            <person name="Cronin A."/>
            <person name="Quail M.A."/>
            <person name="Bray-Allen S."/>
            <person name="Clark L."/>
            <person name="Doggett J."/>
            <person name="Hall S."/>
            <person name="Kay M."/>
            <person name="Lennard N."/>
            <person name="McLay K."/>
            <person name="Mayes R."/>
            <person name="Pettett A."/>
            <person name="Rajandream M.A."/>
            <person name="Lyne M."/>
            <person name="Benes V."/>
            <person name="Rechmann S."/>
            <person name="Borkova D."/>
            <person name="Bloecker H."/>
            <person name="Scharfe M."/>
            <person name="Grimm M."/>
            <person name="Loehnert T.-H."/>
            <person name="Dose S."/>
            <person name="de Haan M."/>
            <person name="Maarse A.C."/>
            <person name="Schaefer M."/>
            <person name="Mueller-Auer S."/>
            <person name="Gabel C."/>
            <person name="Fuchs M."/>
            <person name="Fartmann B."/>
            <person name="Granderath K."/>
            <person name="Dauner D."/>
            <person name="Herzl A."/>
            <person name="Neumann S."/>
            <person name="Argiriou A."/>
            <person name="Vitale D."/>
            <person name="Liguori R."/>
            <person name="Piravandi E."/>
            <person name="Massenet O."/>
            <person name="Quigley F."/>
            <person name="Clabauld G."/>
            <person name="Muendlein A."/>
            <person name="Felber R."/>
            <person name="Schnabl S."/>
            <person name="Hiller R."/>
            <person name="Schmidt W."/>
            <person name="Lecharny A."/>
            <person name="Aubourg S."/>
            <person name="Chefdor F."/>
            <person name="Cooke R."/>
            <person name="Berger C."/>
            <person name="Monfort A."/>
            <person name="Casacuberta E."/>
            <person name="Gibbons T."/>
            <person name="Weber N."/>
            <person name="Vandenbol M."/>
            <person name="Bargues M."/>
            <person name="Terol J."/>
            <person name="Torres A."/>
            <person name="Perez-Perez A."/>
            <person name="Purnelle B."/>
            <person name="Bent E."/>
            <person name="Johnson S."/>
            <person name="Tacon D."/>
            <person name="Jesse T."/>
            <person name="Heijnen L."/>
            <person name="Schwarz S."/>
            <person name="Scholler P."/>
            <person name="Heber S."/>
            <person name="Francs P."/>
            <person name="Bielke C."/>
            <person name="Frishman D."/>
            <person name="Haase D."/>
            <person name="Lemcke K."/>
            <person name="Mewes H.-W."/>
            <person name="Stocker S."/>
            <person name="Zaccaria P."/>
            <person name="Bevan M."/>
            <person name="Wilson R.K."/>
            <person name="de la Bastide M."/>
            <person name="Habermann K."/>
            <person name="Parnell L."/>
            <person name="Dedhia N."/>
            <person name="Gnoj L."/>
            <person name="Schutz K."/>
            <person name="Huang E."/>
            <person name="Spiegel L."/>
            <person name="Sekhon M."/>
            <person name="Murray J."/>
            <person name="Sheet P."/>
            <person name="Cordes M."/>
            <person name="Abu-Threideh J."/>
            <person name="Stoneking T."/>
            <person name="Kalicki J."/>
            <person name="Graves T."/>
            <person name="Harmon G."/>
            <person name="Edwards J."/>
            <person name="Latreille P."/>
            <person name="Courtney L."/>
            <person name="Cloud J."/>
            <person name="Abbott A."/>
            <person name="Scott K."/>
            <person name="Johnson D."/>
            <person name="Minx P."/>
            <person name="Bentley D."/>
            <person name="Fulton B."/>
            <person name="Miller N."/>
            <person name="Greco T."/>
            <person name="Kemp K."/>
            <person name="Kramer J."/>
            <person name="Fulton L."/>
            <person name="Mardis E."/>
            <person name="Dante M."/>
            <person name="Pepin K."/>
            <person name="Hillier L.W."/>
            <person name="Nelson J."/>
            <person name="Spieth J."/>
            <person name="Ryan E."/>
            <person name="Andrews S."/>
            <person name="Geisel C."/>
            <person name="Layman D."/>
            <person name="Du H."/>
            <person name="Ali J."/>
            <person name="Berghoff A."/>
            <person name="Jones K."/>
            <person name="Drone K."/>
            <person name="Cotton M."/>
            <person name="Joshu C."/>
            <person name="Antonoiu B."/>
            <person name="Zidanic M."/>
            <person name="Strong C."/>
            <person name="Sun H."/>
            <person name="Lamar B."/>
            <person name="Yordan C."/>
            <person name="Ma P."/>
            <person name="Zhong J."/>
            <person name="Preston R."/>
            <person name="Vil D."/>
            <person name="Shekher M."/>
            <person name="Matero A."/>
            <person name="Shah R."/>
            <person name="Swaby I.K."/>
            <person name="O'Shaughnessy A."/>
            <person name="Rodriguez M."/>
            <person name="Hoffman J."/>
            <person name="Till S."/>
            <person name="Granat S."/>
            <person name="Shohdy N."/>
            <person name="Hasegawa A."/>
            <person name="Hameed A."/>
            <person name="Lodhi M."/>
            <person name="Johnson A."/>
            <person name="Chen E."/>
            <person name="Marra M.A."/>
            <person name="Martienssen R."/>
            <person name="McCombie W.R."/>
        </authorList>
    </citation>
    <scope>NUCLEOTIDE SEQUENCE [LARGE SCALE GENOMIC DNA]</scope>
    <source>
        <strain>cv. Columbia</strain>
    </source>
</reference>
<reference key="3">
    <citation type="journal article" date="2017" name="Plant J.">
        <title>Araport11: a complete reannotation of the Arabidopsis thaliana reference genome.</title>
        <authorList>
            <person name="Cheng C.Y."/>
            <person name="Krishnakumar V."/>
            <person name="Chan A.P."/>
            <person name="Thibaud-Nissen F."/>
            <person name="Schobel S."/>
            <person name="Town C.D."/>
        </authorList>
    </citation>
    <scope>GENOME REANNOTATION</scope>
    <source>
        <strain>cv. Columbia</strain>
    </source>
</reference>
<reference key="4">
    <citation type="submission" date="2005-01" db="EMBL/GenBank/DDBJ databases">
        <title>Arabidopsis ORF clones.</title>
        <authorList>
            <person name="Shinn P."/>
            <person name="Chen H."/>
            <person name="Cheuk R.F."/>
            <person name="Kim C.J."/>
            <person name="Ecker J.R."/>
        </authorList>
    </citation>
    <scope>NUCLEOTIDE SEQUENCE [LARGE SCALE MRNA]</scope>
    <source>
        <strain>cv. Columbia</strain>
    </source>
</reference>
<reference key="5">
    <citation type="submission" date="2005-03" db="EMBL/GenBank/DDBJ databases">
        <title>Large-scale analysis of RIKEN Arabidopsis full-length (RAFL) cDNAs.</title>
        <authorList>
            <person name="Totoki Y."/>
            <person name="Seki M."/>
            <person name="Ishida J."/>
            <person name="Nakajima M."/>
            <person name="Enju A."/>
            <person name="Kamiya A."/>
            <person name="Narusaka M."/>
            <person name="Shin-i T."/>
            <person name="Nakagawa M."/>
            <person name="Sakamoto N."/>
            <person name="Oishi K."/>
            <person name="Kohara Y."/>
            <person name="Kobayashi M."/>
            <person name="Toyoda A."/>
            <person name="Sakaki Y."/>
            <person name="Sakurai T."/>
            <person name="Iida K."/>
            <person name="Akiyama K."/>
            <person name="Satou M."/>
            <person name="Toyoda T."/>
            <person name="Konagaya A."/>
            <person name="Carninci P."/>
            <person name="Kawai J."/>
            <person name="Hayashizaki Y."/>
            <person name="Shinozaki K."/>
        </authorList>
    </citation>
    <scope>NUCLEOTIDE SEQUENCE [LARGE SCALE MRNA]</scope>
    <source>
        <strain>cv. Columbia</strain>
    </source>
</reference>
<reference key="6">
    <citation type="journal article" date="2014" name="Cell Res.">
        <title>DUF221 proteins are a family of osmosensitive calcium-permeable cation channels conserved across eukaryotes.</title>
        <authorList>
            <person name="Hou C."/>
            <person name="Tian W."/>
            <person name="Kleist T."/>
            <person name="He K."/>
            <person name="Garcia V."/>
            <person name="Bai F."/>
            <person name="Hao Y."/>
            <person name="Luan S."/>
            <person name="Li L."/>
        </authorList>
    </citation>
    <scope>GENE FAMILY</scope>
    <scope>FUNCTION</scope>
    <scope>ACTIVITY REGULATION</scope>
</reference>
<reference key="7">
    <citation type="journal article" date="2018" name="Elife">
        <title>OSCA/TMEM63 are an Evolutionarily Conserved Family of Mechanically Activated Ion Channels.</title>
        <authorList>
            <person name="Murthy S.E."/>
            <person name="Dubin A.E."/>
            <person name="Whitwam T."/>
            <person name="Jojoa-Cruz S."/>
            <person name="Cahalan S.M."/>
            <person name="Mousavi S.A.R."/>
            <person name="Ward A.B."/>
            <person name="Patapoutian A."/>
        </authorList>
    </citation>
    <scope>FUNCTION</scope>
    <scope>ACTIVITY REGULATION</scope>
</reference>
<reference key="8">
    <citation type="journal article" date="2024" name="Elife">
        <title>Structure-guided mutagenesis of OSCAs reveals differential activation to mechanical stimuli.</title>
        <authorList>
            <person name="Jojoa-Cruz S."/>
            <person name="Dubin A.E."/>
            <person name="Lee W.H."/>
            <person name="Ward A.B."/>
        </authorList>
    </citation>
    <scope>FUNCTION</scope>
    <scope>ACTIVITY REGULATION</scope>
    <scope>MUTAGENESIS OF TRP-75; PRO-77; LEU-80; LYS-435 AND LYS-536</scope>
</reference>
<reference key="9">
    <citation type="journal article" date="2024" name="Elife">
        <title>TMEM16 and OSCA/TMEM63 proteins share a conserved potential to permeate ions and phospholipids.</title>
        <authorList>
            <person name="Lowry A.J."/>
            <person name="Liang P."/>
            <person name="Song M."/>
            <person name="Wan Y."/>
            <person name="Pei Z.M."/>
            <person name="Yang H."/>
            <person name="Zhang Y."/>
        </authorList>
    </citation>
    <scope>MUTAGENESIS OF LEU-438 AND ALA-439</scope>
</reference>
<reference key="10">
    <citation type="journal article" date="2018" name="Elife">
        <title>Cryo-EM structure of the mechanically activated ion channel OSCA1.2.</title>
        <authorList>
            <person name="Jojoa-Cruz S."/>
            <person name="Saotome K."/>
            <person name="Murthy S.E."/>
            <person name="Tsui C.C.A."/>
            <person name="Sansom M.S."/>
            <person name="Patapoutian A."/>
            <person name="Ward A.B."/>
        </authorList>
    </citation>
    <scope>STRUCTURE BY ELECTRON MICROSCOPY (3.10 ANGSTROMS)</scope>
    <scope>FUNCTION</scope>
    <scope>ACTIVITY REGULATION</scope>
    <scope>HOMODIMERIZATION</scope>
    <scope>TOPOLOGY</scope>
    <scope>MUTAGENESIS OF GLU-531</scope>
</reference>
<reference evidence="16" key="11">
    <citation type="journal article" date="2018" name="Nat. Commun.">
        <title>Structure of the hyperosmolality-gated calcium-permeable channel OSCA1.2.</title>
        <authorList>
            <person name="Liu X."/>
            <person name="Wang J."/>
            <person name="Sun L."/>
        </authorList>
    </citation>
    <scope>STRUCTURE BY ELECTRON MICROSCOPY (3.68 ANGSTROMS)</scope>
    <scope>SUBUNIT</scope>
    <scope>TOPOLOGY</scope>
</reference>
<reference evidence="18 19 20 21 22 23 24 25" key="12">
    <citation type="journal article" date="2024" name="Nature">
        <title>Mechanical activation opens a lipid-lined pore in OSCA ion channels.</title>
        <authorList>
            <person name="Han Y."/>
            <person name="Zhou Z."/>
            <person name="Jin R."/>
            <person name="Dai F."/>
            <person name="Ge Y."/>
            <person name="Ju X."/>
            <person name="Ma X."/>
            <person name="He S."/>
            <person name="Yuan L."/>
            <person name="Wang Y."/>
            <person name="Yang W."/>
            <person name="Yue X."/>
            <person name="Chen Z."/>
            <person name="Sun Y."/>
            <person name="Corry B."/>
            <person name="Cox C.D."/>
            <person name="Zhang Y."/>
        </authorList>
    </citation>
    <scope>STRUCTURE BY ELECTRON MICROSCOPY (3.23 ANGSTROMS)</scope>
    <scope>FUNCTION</scope>
    <scope>ACTIVITY REGULATION</scope>
    <scope>SUBUNIT</scope>
    <scope>MUTAGENESIS OF VAL-335</scope>
</reference>
<reference evidence="17" key="13">
    <citation type="journal article" date="2024" name="Structure">
        <title>Structure of mechanically activated ion channel OSCA2.3 reveals mobile elements in the transmembrane domain.</title>
        <authorList>
            <person name="Jojoa-Cruz S."/>
            <person name="Burendei B."/>
            <person name="Lee W.H."/>
            <person name="Ward A.B."/>
        </authorList>
    </citation>
    <scope>STRUCTURE BY ELECTRON MICROSCOPY (2.80 ANGSTROMS)</scope>
</reference>
<feature type="chain" id="PRO_0000429798" description="Hyperosmolality-gated Ca2+ permeable channel 1.2">
    <location>
        <begin position="1"/>
        <end position="771"/>
    </location>
</feature>
<feature type="topological domain" description="Extracellular" evidence="5 6 14 16">
    <location>
        <begin position="1"/>
        <end position="4"/>
    </location>
</feature>
<feature type="transmembrane region" description="Helical; Name=TM0" evidence="5 16">
    <location>
        <begin position="5"/>
        <end position="27"/>
    </location>
</feature>
<feature type="topological domain" description="Cytoplasmic" evidence="5 6 14 16">
    <location>
        <begin position="28"/>
        <end position="100"/>
    </location>
</feature>
<feature type="transmembrane region" description="Helical; Name=TM1" evidence="5 6 16">
    <location>
        <begin position="101"/>
        <end position="125"/>
    </location>
</feature>
<feature type="topological domain" description="Extracellular" evidence="5 6 14 16">
    <location>
        <begin position="126"/>
        <end position="156"/>
    </location>
</feature>
<feature type="transmembrane region" description="Helical; Name=TM2" evidence="5 6 16">
    <location>
        <begin position="157"/>
        <end position="178"/>
    </location>
</feature>
<feature type="topological domain" description="Cytoplasmic" evidence="5 6 14 16">
    <location>
        <begin position="179"/>
        <end position="374"/>
    </location>
</feature>
<feature type="transmembrane region" description="Helical; Name=TM3" evidence="5 6 16">
    <location>
        <begin position="375"/>
        <end position="401"/>
    </location>
</feature>
<feature type="topological domain" description="Extracellular" evidence="5 6 14 16">
    <location>
        <begin position="402"/>
        <end position="419"/>
    </location>
</feature>
<feature type="transmembrane region" description="Helical; Name=TM4" evidence="5 6 16">
    <location>
        <begin position="420"/>
        <end position="445"/>
    </location>
</feature>
<feature type="topological domain" description="Cytoplasmic" evidence="5 6 14 16">
    <location>
        <begin position="446"/>
        <end position="462"/>
    </location>
</feature>
<feature type="transmembrane region" description="Helical; Name=TM5" evidence="5 6 16">
    <location>
        <begin position="463"/>
        <end position="485"/>
    </location>
</feature>
<feature type="topological domain" description="Extracellular" evidence="5 6 14 16">
    <location>
        <begin position="486"/>
        <end position="504"/>
    </location>
</feature>
<feature type="transmembrane region" description="Helical; Name=TM6" evidence="5 6 16">
    <location>
        <begin position="505"/>
        <end position="533"/>
    </location>
</feature>
<feature type="topological domain" description="Cytoplasmic" evidence="5 6 14 16">
    <location>
        <begin position="534"/>
        <end position="566"/>
    </location>
</feature>
<feature type="transmembrane region" description="Helical; Name=TM7" evidence="5 6 16">
    <location>
        <begin position="567"/>
        <end position="588"/>
    </location>
</feature>
<feature type="topological domain" description="Extracellular" evidence="5 6 14 16">
    <location>
        <position position="589"/>
    </location>
</feature>
<feature type="transmembrane region" description="Helical; Name=TM8" evidence="5 6 16">
    <location>
        <begin position="590"/>
        <end position="605"/>
    </location>
</feature>
<feature type="topological domain" description="Cytoplasmic" evidence="5 6 14 16">
    <location>
        <begin position="606"/>
        <end position="625"/>
    </location>
</feature>
<feature type="transmembrane region" description="Helical; Name=TM9" evidence="5 6 16">
    <location>
        <begin position="626"/>
        <end position="648"/>
    </location>
</feature>
<feature type="topological domain" description="Extracellular" evidence="5 6 14 16">
    <location>
        <begin position="649"/>
        <end position="651"/>
    </location>
</feature>
<feature type="transmembrane region" description="Helical; Name=TM10" evidence="5 6 16">
    <location>
        <begin position="652"/>
        <end position="670"/>
    </location>
</feature>
<feature type="topological domain" description="Cytoplasmic" evidence="5 6 14 16">
    <location>
        <begin position="671"/>
        <end position="771"/>
    </location>
</feature>
<feature type="region of interest" description="Disordered" evidence="1">
    <location>
        <begin position="741"/>
        <end position="771"/>
    </location>
</feature>
<feature type="mutagenesis site" description="Abolished activation in response to poke without affecting activation in response to stretch." evidence="8">
    <original>W</original>
    <variation>K</variation>
    <location>
        <position position="75"/>
    </location>
</feature>
<feature type="mutagenesis site" description="Does not affect activation in response to poke or stretch." evidence="8">
    <original>P</original>
    <variation>R</variation>
    <location>
        <position position="77"/>
    </location>
</feature>
<feature type="mutagenesis site" description="Abolished activation in response to poke without affecting activation in response to stretch." evidence="8">
    <original>L</original>
    <variation>E</variation>
    <location>
        <position position="80"/>
    </location>
</feature>
<feature type="mutagenesis site" description="Abolished homodimerization, leading to formation of a monomer." evidence="7">
    <original>V</original>
    <variation>W</variation>
    <location>
        <position position="335"/>
    </location>
</feature>
<feature type="mutagenesis site" description="Abolished activation in response to poke; when associated with I-536." evidence="8">
    <original>K</original>
    <variation>I</variation>
    <location>
        <position position="435"/>
    </location>
</feature>
<feature type="mutagenesis site" description="Converts the channel into a constitutively active phospholipid scramblase." evidence="9">
    <original>L</original>
    <variation>K</variation>
    <location>
        <position position="438"/>
    </location>
</feature>
<feature type="mutagenesis site" description="Converts the channel into an osmolarity-sensing phospholipid scramblase." evidence="9">
    <original>A</original>
    <variation>K</variation>
    <location>
        <position position="439"/>
    </location>
</feature>
<feature type="mutagenesis site" description="Decreases the stretch-activated single-channel conductance by 1.6-fold." evidence="4">
    <original>E</original>
    <variation>A</variation>
    <location>
        <position position="531"/>
    </location>
</feature>
<feature type="mutagenesis site" description="Abolished activation in response to poke; when associated with I-435." evidence="8">
    <original>K</original>
    <variation>I</variation>
    <location>
        <position position="536"/>
    </location>
</feature>
<feature type="sequence conflict" description="In Ref. 5; BAD93792." evidence="13" ref="5">
    <original>G</original>
    <variation>S</variation>
    <location>
        <position position="524"/>
    </location>
</feature>
<feature type="sequence conflict" description="In Ref. 5; BAD93792." evidence="13" ref="5">
    <original>L</original>
    <variation>F</variation>
    <location>
        <position position="641"/>
    </location>
</feature>
<feature type="helix" evidence="27">
    <location>
        <begin position="4"/>
        <end position="28"/>
    </location>
</feature>
<feature type="helix" evidence="27">
    <location>
        <begin position="32"/>
        <end position="34"/>
    </location>
</feature>
<feature type="helix" evidence="27">
    <location>
        <begin position="35"/>
        <end position="38"/>
    </location>
</feature>
<feature type="helix" evidence="27">
    <location>
        <begin position="40"/>
        <end position="45"/>
    </location>
</feature>
<feature type="turn" evidence="26">
    <location>
        <begin position="72"/>
        <end position="74"/>
    </location>
</feature>
<feature type="helix" evidence="27">
    <location>
        <begin position="75"/>
        <end position="79"/>
    </location>
</feature>
<feature type="helix" evidence="27">
    <location>
        <begin position="84"/>
        <end position="91"/>
    </location>
</feature>
<feature type="helix" evidence="27">
    <location>
        <begin position="93"/>
        <end position="120"/>
    </location>
</feature>
<feature type="strand" evidence="29">
    <location>
        <begin position="125"/>
        <end position="127"/>
    </location>
</feature>
<feature type="strand" evidence="29">
    <location>
        <begin position="135"/>
        <end position="138"/>
    </location>
</feature>
<feature type="strand" evidence="28">
    <location>
        <begin position="141"/>
        <end position="143"/>
    </location>
</feature>
<feature type="turn" evidence="29">
    <location>
        <begin position="148"/>
        <end position="151"/>
    </location>
</feature>
<feature type="strand" evidence="29">
    <location>
        <begin position="155"/>
        <end position="157"/>
    </location>
</feature>
<feature type="helix" evidence="27">
    <location>
        <begin position="158"/>
        <end position="193"/>
    </location>
</feature>
<feature type="helix" evidence="27">
    <location>
        <begin position="199"/>
        <end position="202"/>
    </location>
</feature>
<feature type="strand" evidence="27">
    <location>
        <begin position="203"/>
        <end position="207"/>
    </location>
</feature>
<feature type="strand" evidence="27">
    <location>
        <begin position="213"/>
        <end position="215"/>
    </location>
</feature>
<feature type="helix" evidence="27">
    <location>
        <begin position="217"/>
        <end position="228"/>
    </location>
</feature>
<feature type="turn" evidence="27">
    <location>
        <begin position="230"/>
        <end position="232"/>
    </location>
</feature>
<feature type="strand" evidence="27">
    <location>
        <begin position="233"/>
        <end position="240"/>
    </location>
</feature>
<feature type="helix" evidence="27">
    <location>
        <begin position="243"/>
        <end position="264"/>
    </location>
</feature>
<feature type="turn" evidence="28">
    <location>
        <begin position="271"/>
        <end position="273"/>
    </location>
</feature>
<feature type="strand" evidence="26">
    <location>
        <begin position="279"/>
        <end position="282"/>
    </location>
</feature>
<feature type="turn" evidence="28">
    <location>
        <begin position="283"/>
        <end position="287"/>
    </location>
</feature>
<feature type="strand" evidence="26">
    <location>
        <begin position="288"/>
        <end position="290"/>
    </location>
</feature>
<feature type="helix" evidence="27">
    <location>
        <begin position="291"/>
        <end position="314"/>
    </location>
</feature>
<feature type="helix" evidence="27">
    <location>
        <begin position="316"/>
        <end position="318"/>
    </location>
</feature>
<feature type="strand" evidence="27">
    <location>
        <begin position="319"/>
        <end position="329"/>
    </location>
</feature>
<feature type="helix" evidence="27">
    <location>
        <begin position="330"/>
        <end position="337"/>
    </location>
</feature>
<feature type="strand" evidence="27">
    <location>
        <begin position="342"/>
        <end position="344"/>
    </location>
</feature>
<feature type="strand" evidence="27">
    <location>
        <begin position="347"/>
        <end position="352"/>
    </location>
</feature>
<feature type="helix" evidence="27">
    <location>
        <begin position="356"/>
        <end position="358"/>
    </location>
</feature>
<feature type="helix" evidence="27">
    <location>
        <begin position="361"/>
        <end position="365"/>
    </location>
</feature>
<feature type="helix" evidence="27">
    <location>
        <begin position="368"/>
        <end position="370"/>
    </location>
</feature>
<feature type="helix" evidence="27">
    <location>
        <begin position="371"/>
        <end position="388"/>
    </location>
</feature>
<feature type="helix" evidence="27">
    <location>
        <begin position="390"/>
        <end position="398"/>
    </location>
</feature>
<feature type="helix" evidence="27">
    <location>
        <begin position="402"/>
        <end position="408"/>
    </location>
</feature>
<feature type="helix" evidence="27">
    <location>
        <begin position="410"/>
        <end position="415"/>
    </location>
</feature>
<feature type="strand" evidence="27">
    <location>
        <begin position="416"/>
        <end position="418"/>
    </location>
</feature>
<feature type="helix" evidence="27">
    <location>
        <begin position="419"/>
        <end position="437"/>
    </location>
</feature>
<feature type="helix" evidence="27">
    <location>
        <begin position="438"/>
        <end position="440"/>
    </location>
</feature>
<feature type="helix" evidence="27">
    <location>
        <begin position="441"/>
        <end position="451"/>
    </location>
</feature>
<feature type="helix" evidence="27">
    <location>
        <begin position="457"/>
        <end position="475"/>
    </location>
</feature>
<feature type="helix" evidence="27">
    <location>
        <begin position="477"/>
        <end position="486"/>
    </location>
</feature>
<feature type="helix" evidence="30">
    <location>
        <begin position="490"/>
        <end position="494"/>
    </location>
</feature>
<feature type="turn" evidence="28">
    <location>
        <begin position="498"/>
        <end position="500"/>
    </location>
</feature>
<feature type="turn" evidence="27">
    <location>
        <begin position="506"/>
        <end position="509"/>
    </location>
</feature>
<feature type="helix" evidence="27">
    <location>
        <begin position="510"/>
        <end position="512"/>
    </location>
</feature>
<feature type="helix" evidence="27">
    <location>
        <begin position="513"/>
        <end position="523"/>
    </location>
</feature>
<feature type="helix" evidence="27">
    <location>
        <begin position="525"/>
        <end position="531"/>
    </location>
</feature>
<feature type="turn" evidence="29">
    <location>
        <begin position="532"/>
        <end position="534"/>
    </location>
</feature>
<feature type="helix" evidence="27">
    <location>
        <begin position="535"/>
        <end position="547"/>
    </location>
</feature>
<feature type="helix" evidence="27">
    <location>
        <begin position="552"/>
        <end position="554"/>
    </location>
</feature>
<feature type="helix" evidence="27">
    <location>
        <begin position="555"/>
        <end position="558"/>
    </location>
</feature>
<feature type="helix" evidence="27">
    <location>
        <begin position="566"/>
        <end position="583"/>
    </location>
</feature>
<feature type="turn" evidence="27">
    <location>
        <begin position="584"/>
        <end position="586"/>
    </location>
</feature>
<feature type="helix" evidence="27">
    <location>
        <begin position="588"/>
        <end position="590"/>
    </location>
</feature>
<feature type="helix" evidence="27">
    <location>
        <begin position="591"/>
        <end position="611"/>
    </location>
</feature>
<feature type="turn" evidence="27">
    <location>
        <begin position="620"/>
        <end position="623"/>
    </location>
</feature>
<feature type="helix" evidence="27">
    <location>
        <begin position="624"/>
        <end position="646"/>
    </location>
</feature>
<feature type="strand" evidence="29">
    <location>
        <begin position="647"/>
        <end position="650"/>
    </location>
</feature>
<feature type="turn" evidence="29">
    <location>
        <begin position="652"/>
        <end position="654"/>
    </location>
</feature>
<feature type="helix" evidence="27">
    <location>
        <begin position="655"/>
        <end position="675"/>
    </location>
</feature>
<feature type="helix" evidence="27">
    <location>
        <begin position="678"/>
        <end position="681"/>
    </location>
</feature>
<feature type="helix" evidence="27">
    <location>
        <begin position="685"/>
        <end position="698"/>
    </location>
</feature>
<feature type="helix" evidence="27">
    <location>
        <begin position="704"/>
        <end position="709"/>
    </location>
</feature>
<feature type="turn" evidence="27">
    <location>
        <begin position="710"/>
        <end position="712"/>
    </location>
</feature>
<feature type="turn" evidence="27">
    <location>
        <begin position="715"/>
        <end position="717"/>
    </location>
</feature>
<protein>
    <recommendedName>
        <fullName evidence="11">Hyperosmolality-gated Ca2+ permeable channel 1.2</fullName>
        <shortName evidence="11 12">AtOSCA1.2</shortName>
    </recommendedName>
    <alternativeName>
        <fullName evidence="10">Calcium permeable stress-gated cation channel 1</fullName>
        <shortName evidence="10">AtCSC1</shortName>
    </alternativeName>
</protein>
<proteinExistence type="evidence at protein level"/>
<evidence type="ECO:0000256" key="1">
    <source>
        <dbReference type="SAM" id="MobiDB-lite"/>
    </source>
</evidence>
<evidence type="ECO:0000269" key="2">
    <source>
    </source>
</evidence>
<evidence type="ECO:0000269" key="3">
    <source>
    </source>
</evidence>
<evidence type="ECO:0000269" key="4">
    <source>
    </source>
</evidence>
<evidence type="ECO:0000269" key="5">
    <source>
    </source>
</evidence>
<evidence type="ECO:0000269" key="6">
    <source>
    </source>
</evidence>
<evidence type="ECO:0000269" key="7">
    <source>
    </source>
</evidence>
<evidence type="ECO:0000269" key="8">
    <source>
    </source>
</evidence>
<evidence type="ECO:0000269" key="9">
    <source>
    </source>
</evidence>
<evidence type="ECO:0000303" key="10">
    <source>
    </source>
</evidence>
<evidence type="ECO:0000303" key="11">
    <source>
    </source>
</evidence>
<evidence type="ECO:0000303" key="12">
    <source>
    </source>
</evidence>
<evidence type="ECO:0000305" key="13"/>
<evidence type="ECO:0000305" key="14">
    <source>
    </source>
</evidence>
<evidence type="ECO:0000312" key="15">
    <source>
        <dbReference type="Araport" id="AT4G22120"/>
    </source>
</evidence>
<evidence type="ECO:0007744" key="16">
    <source>
        <dbReference type="PDB" id="6IJZ"/>
    </source>
</evidence>
<evidence type="ECO:0007744" key="17">
    <source>
        <dbReference type="PDB" id="8T56"/>
    </source>
</evidence>
<evidence type="ECO:0007744" key="18">
    <source>
        <dbReference type="PDB" id="8XAJ"/>
    </source>
</evidence>
<evidence type="ECO:0007744" key="19">
    <source>
        <dbReference type="PDB" id="8XNG"/>
    </source>
</evidence>
<evidence type="ECO:0007744" key="20">
    <source>
        <dbReference type="PDB" id="8XS4"/>
    </source>
</evidence>
<evidence type="ECO:0007744" key="21">
    <source>
        <dbReference type="PDB" id="8XS5"/>
    </source>
</evidence>
<evidence type="ECO:0007744" key="22">
    <source>
        <dbReference type="PDB" id="8XVX"/>
    </source>
</evidence>
<evidence type="ECO:0007744" key="23">
    <source>
        <dbReference type="PDB" id="8XW1"/>
    </source>
</evidence>
<evidence type="ECO:0007744" key="24">
    <source>
        <dbReference type="PDB" id="8XW2"/>
    </source>
</evidence>
<evidence type="ECO:0007744" key="25">
    <source>
        <dbReference type="PDB" id="8XW3"/>
    </source>
</evidence>
<evidence type="ECO:0007829" key="26">
    <source>
        <dbReference type="PDB" id="6MGV"/>
    </source>
</evidence>
<evidence type="ECO:0007829" key="27">
    <source>
        <dbReference type="PDB" id="8T56"/>
    </source>
</evidence>
<evidence type="ECO:0007829" key="28">
    <source>
        <dbReference type="PDB" id="8XAJ"/>
    </source>
</evidence>
<evidence type="ECO:0007829" key="29">
    <source>
        <dbReference type="PDB" id="8XS4"/>
    </source>
</evidence>
<evidence type="ECO:0007829" key="30">
    <source>
        <dbReference type="PDB" id="8XVX"/>
    </source>
</evidence>
<sequence>MATLQDIGVSAGINILSAFVFFIIFAVLRLQPFNDRVYFSKWYLKGLRSSPARGGAFAQRFVNLDFRSYMKFLNWMPEALKMPEPELIDHAGLDSVVYLRIYWLGLKIFTPIAVLAWAVLVPVNWTNNTLEMAKQLRNVTSSDIDKLSVSNIPEYSMRFWTHIVMAYAFTIWTCYVLMKEYETIANMRLQFVASEARRPDQFTVLVRNVPPDADESVSELVEHFFLVNHPDHYLTHQVVCNANKLADLVKKKKKLQNWLDYYQLKYARNNSQRIMVKLGFLGLWGQKVDAIEHYIAEIDKISKEISKEREEVVNDPKAIMPAAFVSFKTRWAAAVCAQTQQTRNPTQWLTEWAPEPRDVFWSNLAIPYVSLTVRRLIMHVAFFFLTFFFIVPIAFVQSLATIEGIVKAAPFLKFIVDDKFMKSVIQGFLPGIALKLFLAFLPSILMIMSKFEGFTSISSLERRAAFRYYIFNLVNVFLASVIAGAAFEQLNSFLNQSANQIPKTIGVAIPMKATFFITYIMVDGWAGVAGEILMLKPLIMFHLKNAFLVKTDKDREEAMDPGSIGFNTGEPRIQLYFLLGLVYAPVTPMLLPFILVFFALAYIVYRHQIINVYNQEYESAAAFWPDVHGRVIAALVISQLLLMGLLGTKHAALAAPFLIALPVLTIGFHHFCKGRYEPAFIRYPLQEAMMKDTLETAREPNLNLKGYLQNAYVHPVFKGDEDDYDIDDKLGKFEDEAIIVPTKRQSRRNTPAPSIISGDDSPSLPFSGKLV</sequence>
<name>OSC12_ARATH</name>
<keyword id="KW-0002">3D-structure</keyword>
<keyword id="KW-0106">Calcium</keyword>
<keyword id="KW-0407">Ion channel</keyword>
<keyword id="KW-0406">Ion transport</keyword>
<keyword id="KW-0472">Membrane</keyword>
<keyword id="KW-1185">Reference proteome</keyword>
<keyword id="KW-0812">Transmembrane</keyword>
<keyword id="KW-1133">Transmembrane helix</keyword>
<keyword id="KW-0813">Transport</keyword>
<dbReference type="EMBL" id="KJ920357">
    <property type="protein sequence ID" value="AIU34614.1"/>
    <property type="molecule type" value="mRNA"/>
</dbReference>
<dbReference type="EMBL" id="AL022140">
    <property type="protein sequence ID" value="CAA18115.1"/>
    <property type="status" value="ALT_SEQ"/>
    <property type="molecule type" value="Genomic_DNA"/>
</dbReference>
<dbReference type="EMBL" id="AL161556">
    <property type="protein sequence ID" value="CAB79167.1"/>
    <property type="status" value="ALT_SEQ"/>
    <property type="molecule type" value="Genomic_DNA"/>
</dbReference>
<dbReference type="EMBL" id="CP002687">
    <property type="protein sequence ID" value="AEE84554.1"/>
    <property type="molecule type" value="Genomic_DNA"/>
</dbReference>
<dbReference type="EMBL" id="CP002687">
    <property type="protein sequence ID" value="AEE84555.1"/>
    <property type="molecule type" value="Genomic_DNA"/>
</dbReference>
<dbReference type="EMBL" id="CP002687">
    <property type="protein sequence ID" value="AEE84556.1"/>
    <property type="molecule type" value="Genomic_DNA"/>
</dbReference>
<dbReference type="EMBL" id="CP002687">
    <property type="protein sequence ID" value="AEE84557.1"/>
    <property type="molecule type" value="Genomic_DNA"/>
</dbReference>
<dbReference type="EMBL" id="CP002687">
    <property type="protein sequence ID" value="AEE84558.1"/>
    <property type="molecule type" value="Genomic_DNA"/>
</dbReference>
<dbReference type="EMBL" id="CP002687">
    <property type="protein sequence ID" value="AEE84559.1"/>
    <property type="molecule type" value="Genomic_DNA"/>
</dbReference>
<dbReference type="EMBL" id="BT015821">
    <property type="protein sequence ID" value="AAU94384.1"/>
    <property type="molecule type" value="mRNA"/>
</dbReference>
<dbReference type="EMBL" id="BT020529">
    <property type="protein sequence ID" value="AAW50707.1"/>
    <property type="molecule type" value="mRNA"/>
</dbReference>
<dbReference type="EMBL" id="AK221219">
    <property type="protein sequence ID" value="BAD93792.1"/>
    <property type="molecule type" value="mRNA"/>
</dbReference>
<dbReference type="PIR" id="T49119">
    <property type="entry name" value="T49119"/>
</dbReference>
<dbReference type="RefSeq" id="NP_001078425.1">
    <property type="nucleotide sequence ID" value="NM_001084956.2"/>
</dbReference>
<dbReference type="RefSeq" id="NP_001119027.1">
    <property type="nucleotide sequence ID" value="NM_001125555.2"/>
</dbReference>
<dbReference type="RefSeq" id="NP_001119028.1">
    <property type="nucleotide sequence ID" value="NM_001125556.2"/>
</dbReference>
<dbReference type="RefSeq" id="NP_001119029.1">
    <property type="nucleotide sequence ID" value="NM_001125557.1"/>
</dbReference>
<dbReference type="RefSeq" id="NP_001190796.1">
    <property type="nucleotide sequence ID" value="NM_001203867.2"/>
</dbReference>
<dbReference type="RefSeq" id="NP_193943.2">
    <property type="nucleotide sequence ID" value="NM_118333.5"/>
</dbReference>
<dbReference type="PDB" id="6IJZ">
    <property type="method" value="EM"/>
    <property type="resolution" value="3.68 A"/>
    <property type="chains" value="A/B=1-771"/>
</dbReference>
<dbReference type="PDB" id="6MGV">
    <property type="method" value="EM"/>
    <property type="resolution" value="3.10 A"/>
    <property type="chains" value="A/B=1-771"/>
</dbReference>
<dbReference type="PDB" id="6MGW">
    <property type="method" value="EM"/>
    <property type="resolution" value="3.50 A"/>
    <property type="chains" value="A/B=1-771"/>
</dbReference>
<dbReference type="PDB" id="8T56">
    <property type="method" value="EM"/>
    <property type="resolution" value="2.80 A"/>
    <property type="chains" value="A/B=1-771"/>
</dbReference>
<dbReference type="PDB" id="8XAJ">
    <property type="method" value="EM"/>
    <property type="resolution" value="3.29 A"/>
    <property type="chains" value="A/B=1-771"/>
</dbReference>
<dbReference type="PDB" id="8XNG">
    <property type="method" value="EM"/>
    <property type="resolution" value="3.56 A"/>
    <property type="chains" value="A/B=1-771"/>
</dbReference>
<dbReference type="PDB" id="8XS4">
    <property type="method" value="EM"/>
    <property type="resolution" value="3.23 A"/>
    <property type="chains" value="A/B=1-771"/>
</dbReference>
<dbReference type="PDB" id="8XS5">
    <property type="method" value="EM"/>
    <property type="resolution" value="3.33 A"/>
    <property type="chains" value="A/B=1-771"/>
</dbReference>
<dbReference type="PDB" id="8XVX">
    <property type="method" value="EM"/>
    <property type="resolution" value="3.32 A"/>
    <property type="chains" value="A/B=1-771"/>
</dbReference>
<dbReference type="PDB" id="8XW1">
    <property type="method" value="EM"/>
    <property type="resolution" value="4.49 A"/>
    <property type="chains" value="A=1-771"/>
</dbReference>
<dbReference type="PDB" id="8XW2">
    <property type="method" value="EM"/>
    <property type="resolution" value="3.59 A"/>
    <property type="chains" value="A/B=1-771"/>
</dbReference>
<dbReference type="PDB" id="8XW3">
    <property type="method" value="EM"/>
    <property type="resolution" value="3.63 A"/>
    <property type="chains" value="A/B=1-771"/>
</dbReference>
<dbReference type="PDBsum" id="6IJZ"/>
<dbReference type="PDBsum" id="6MGV"/>
<dbReference type="PDBsum" id="6MGW"/>
<dbReference type="PDBsum" id="8T56"/>
<dbReference type="PDBsum" id="8XAJ"/>
<dbReference type="PDBsum" id="8XNG"/>
<dbReference type="PDBsum" id="8XS4"/>
<dbReference type="PDBsum" id="8XS5"/>
<dbReference type="PDBsum" id="8XVX"/>
<dbReference type="PDBsum" id="8XW1"/>
<dbReference type="PDBsum" id="8XW2"/>
<dbReference type="PDBsum" id="8XW3"/>
<dbReference type="EMDB" id="EMD-38200"/>
<dbReference type="EMDB" id="EMD-38503"/>
<dbReference type="EMDB" id="EMD-38614"/>
<dbReference type="EMDB" id="EMD-38615"/>
<dbReference type="EMDB" id="EMD-38721"/>
<dbReference type="EMDB" id="EMD-38727"/>
<dbReference type="EMDB" id="EMD-38728"/>
<dbReference type="EMDB" id="EMD-38729"/>
<dbReference type="EMDB" id="EMD-41043"/>
<dbReference type="EMDB" id="EMD-9112"/>
<dbReference type="EMDB" id="EMD-9113"/>
<dbReference type="EMDB" id="EMD-9682"/>
<dbReference type="SMR" id="Q5XEZ5"/>
<dbReference type="FunCoup" id="Q5XEZ5">
    <property type="interactions" value="1236"/>
</dbReference>
<dbReference type="STRING" id="3702.Q5XEZ5"/>
<dbReference type="TCDB" id="1.A.17.5.10">
    <property type="family name" value="the calcium-dependent chloride channel (ca-clc) family"/>
</dbReference>
<dbReference type="iPTMnet" id="Q5XEZ5"/>
<dbReference type="PaxDb" id="3702-AT4G22120.2"/>
<dbReference type="ProteomicsDB" id="222653"/>
<dbReference type="EnsemblPlants" id="AT4G22120.1">
    <property type="protein sequence ID" value="AT4G22120.1"/>
    <property type="gene ID" value="AT4G22120"/>
</dbReference>
<dbReference type="EnsemblPlants" id="AT4G22120.2">
    <property type="protein sequence ID" value="AT4G22120.2"/>
    <property type="gene ID" value="AT4G22120"/>
</dbReference>
<dbReference type="EnsemblPlants" id="AT4G22120.3">
    <property type="protein sequence ID" value="AT4G22120.3"/>
    <property type="gene ID" value="AT4G22120"/>
</dbReference>
<dbReference type="EnsemblPlants" id="AT4G22120.4">
    <property type="protein sequence ID" value="AT4G22120.4"/>
    <property type="gene ID" value="AT4G22120"/>
</dbReference>
<dbReference type="EnsemblPlants" id="AT4G22120.5">
    <property type="protein sequence ID" value="AT4G22120.5"/>
    <property type="gene ID" value="AT4G22120"/>
</dbReference>
<dbReference type="EnsemblPlants" id="AT4G22120.6">
    <property type="protein sequence ID" value="AT4G22120.6"/>
    <property type="gene ID" value="AT4G22120"/>
</dbReference>
<dbReference type="GeneID" id="828301"/>
<dbReference type="Gramene" id="AT4G22120.1">
    <property type="protein sequence ID" value="AT4G22120.1"/>
    <property type="gene ID" value="AT4G22120"/>
</dbReference>
<dbReference type="Gramene" id="AT4G22120.2">
    <property type="protein sequence ID" value="AT4G22120.2"/>
    <property type="gene ID" value="AT4G22120"/>
</dbReference>
<dbReference type="Gramene" id="AT4G22120.3">
    <property type="protein sequence ID" value="AT4G22120.3"/>
    <property type="gene ID" value="AT4G22120"/>
</dbReference>
<dbReference type="Gramene" id="AT4G22120.4">
    <property type="protein sequence ID" value="AT4G22120.4"/>
    <property type="gene ID" value="AT4G22120"/>
</dbReference>
<dbReference type="Gramene" id="AT4G22120.5">
    <property type="protein sequence ID" value="AT4G22120.5"/>
    <property type="gene ID" value="AT4G22120"/>
</dbReference>
<dbReference type="Gramene" id="AT4G22120.6">
    <property type="protein sequence ID" value="AT4G22120.6"/>
    <property type="gene ID" value="AT4G22120"/>
</dbReference>
<dbReference type="KEGG" id="ath:AT4G22120"/>
<dbReference type="Araport" id="AT4G22120"/>
<dbReference type="TAIR" id="AT4G22120">
    <property type="gene designation" value="CSC1"/>
</dbReference>
<dbReference type="eggNOG" id="KOG1134">
    <property type="taxonomic scope" value="Eukaryota"/>
</dbReference>
<dbReference type="HOGENOM" id="CLU_002458_7_1_1"/>
<dbReference type="InParanoid" id="Q5XEZ5"/>
<dbReference type="OMA" id="QKWFFAF"/>
<dbReference type="PhylomeDB" id="Q5XEZ5"/>
<dbReference type="PRO" id="PR:Q5XEZ5"/>
<dbReference type="Proteomes" id="UP000006548">
    <property type="component" value="Chromosome 4"/>
</dbReference>
<dbReference type="ExpressionAtlas" id="Q5XEZ5">
    <property type="expression patterns" value="baseline and differential"/>
</dbReference>
<dbReference type="GO" id="GO:0005886">
    <property type="term" value="C:plasma membrane"/>
    <property type="evidence" value="ECO:0007005"/>
    <property type="project" value="TAIR"/>
</dbReference>
<dbReference type="GO" id="GO:0005227">
    <property type="term" value="F:calcium-activated cation channel activity"/>
    <property type="evidence" value="ECO:0000314"/>
    <property type="project" value="UniProtKB"/>
</dbReference>
<dbReference type="GO" id="GO:0042802">
    <property type="term" value="F:identical protein binding"/>
    <property type="evidence" value="ECO:0000353"/>
    <property type="project" value="IntAct"/>
</dbReference>
<dbReference type="GO" id="GO:0008381">
    <property type="term" value="F:mechanosensitive monoatomic ion channel activity"/>
    <property type="evidence" value="ECO:0000314"/>
    <property type="project" value="UniProtKB"/>
</dbReference>
<dbReference type="GO" id="GO:0006812">
    <property type="term" value="P:monoatomic cation transport"/>
    <property type="evidence" value="ECO:0000314"/>
    <property type="project" value="UniProtKB"/>
</dbReference>
<dbReference type="InterPro" id="IPR045122">
    <property type="entry name" value="Csc1-like"/>
</dbReference>
<dbReference type="InterPro" id="IPR003864">
    <property type="entry name" value="CSC1/OSCA1-like_7TM"/>
</dbReference>
<dbReference type="InterPro" id="IPR027815">
    <property type="entry name" value="CSC1/OSCA1-like_cyt"/>
</dbReference>
<dbReference type="InterPro" id="IPR032880">
    <property type="entry name" value="Csc1/OSCA1-like_N"/>
</dbReference>
<dbReference type="PANTHER" id="PTHR13018:SF111">
    <property type="entry name" value="CALCIUM PERMEABLE STRESS-GATED CATION CHANNEL 1"/>
    <property type="match status" value="1"/>
</dbReference>
<dbReference type="PANTHER" id="PTHR13018">
    <property type="entry name" value="PROBABLE MEMBRANE PROTEIN DUF221-RELATED"/>
    <property type="match status" value="1"/>
</dbReference>
<dbReference type="Pfam" id="PF14703">
    <property type="entry name" value="PHM7_cyt"/>
    <property type="match status" value="1"/>
</dbReference>
<dbReference type="Pfam" id="PF02714">
    <property type="entry name" value="RSN1_7TM"/>
    <property type="match status" value="1"/>
</dbReference>
<dbReference type="Pfam" id="PF13967">
    <property type="entry name" value="RSN1_TM"/>
    <property type="match status" value="1"/>
</dbReference>
<gene>
    <name evidence="11" type="primary">OSCA1.2</name>
    <name evidence="10" type="synonym">CSC1</name>
    <name evidence="15" type="ordered locus">At4g22120</name>
    <name type="ORF">F1N20.220</name>
</gene>